<gene>
    <name type="primary">tmem38b-b</name>
</gene>
<comment type="function">
    <text evidence="5">Intracellular monovalent cation channel required for maintenance of rapid intracellular calcium release. Acts as a potassium counter-ion channel that functions in synchronization with calcium release from intracellular stores (PubMed:30770441). Activated by increased cytosolic Ca(2+) levels (PubMed:30770441).</text>
</comment>
<comment type="catalytic activity">
    <reaction evidence="5">
        <text>K(+)(in) = K(+)(out)</text>
        <dbReference type="Rhea" id="RHEA:29463"/>
        <dbReference type="ChEBI" id="CHEBI:29103"/>
    </reaction>
</comment>
<comment type="activity regulation">
    <text evidence="5">Channel activity is activated by increased cytosolic Ca(2+) levels and blocked by luminal high Ca(2+) levels.</text>
</comment>
<comment type="subunit">
    <text evidence="5">Homotrimer; conformation seems to be controled by binding to diacylglycerol (DAG).</text>
</comment>
<comment type="subcellular location">
    <subcellularLocation>
        <location evidence="1">Endoplasmic reticulum membrane</location>
        <topology evidence="1">Multi-pass membrane protein</topology>
    </subcellularLocation>
</comment>
<comment type="similarity">
    <text evidence="6">Belongs to the TMEM38 family.</text>
</comment>
<reference key="1">
    <citation type="submission" date="2004-06" db="EMBL/GenBank/DDBJ databases">
        <authorList>
            <consortium name="NIH - Xenopus Gene Collection (XGC) project"/>
        </authorList>
    </citation>
    <scope>NUCLEOTIDE SEQUENCE [LARGE SCALE MRNA]</scope>
    <source>
        <tissue>Oocyte</tissue>
    </source>
</reference>
<reference evidence="7 8 9 10" key="2">
    <citation type="journal article" date="2019" name="Proc. Natl. Acad. Sci. U.S.A.">
        <title>Structural basis for activity of TRIC counter-ion channels in calcium release.</title>
        <authorList>
            <person name="Wang X.H."/>
            <person name="Su M."/>
            <person name="Gao F."/>
            <person name="Xie W."/>
            <person name="Zeng Y."/>
            <person name="Li D.L."/>
            <person name="Liu X.L."/>
            <person name="Zhao H."/>
            <person name="Qin L."/>
            <person name="Li F."/>
            <person name="Liu Q."/>
            <person name="Clarke O.B."/>
            <person name="Lam S.M."/>
            <person name="Shui G.H."/>
            <person name="Hendrickson W.A."/>
            <person name="Chen Y.H."/>
        </authorList>
    </citation>
    <scope>X-RAY CRYSTALLOGRAPHY (3.10 ANGSTROMS)</scope>
    <scope>SUBUNIT</scope>
    <scope>FUNCTION</scope>
    <scope>CATALYTIC ACTIVITY</scope>
    <scope>ACTIVITY REGULATION</scope>
</reference>
<name>T38BB_XENLA</name>
<keyword id="KW-0002">3D-structure</keyword>
<keyword id="KW-0256">Endoplasmic reticulum</keyword>
<keyword id="KW-0407">Ion channel</keyword>
<keyword id="KW-0406">Ion transport</keyword>
<keyword id="KW-0472">Membrane</keyword>
<keyword id="KW-0630">Potassium</keyword>
<keyword id="KW-0631">Potassium channel</keyword>
<keyword id="KW-0633">Potassium transport</keyword>
<keyword id="KW-1185">Reference proteome</keyword>
<keyword id="KW-0812">Transmembrane</keyword>
<keyword id="KW-1133">Transmembrane helix</keyword>
<keyword id="KW-0813">Transport</keyword>
<proteinExistence type="evidence at protein level"/>
<organism>
    <name type="scientific">Xenopus laevis</name>
    <name type="common">African clawed frog</name>
    <dbReference type="NCBI Taxonomy" id="8355"/>
    <lineage>
        <taxon>Eukaryota</taxon>
        <taxon>Metazoa</taxon>
        <taxon>Chordata</taxon>
        <taxon>Craniata</taxon>
        <taxon>Vertebrata</taxon>
        <taxon>Euteleostomi</taxon>
        <taxon>Amphibia</taxon>
        <taxon>Batrachia</taxon>
        <taxon>Anura</taxon>
        <taxon>Pipoidea</taxon>
        <taxon>Pipidae</taxon>
        <taxon>Xenopodinae</taxon>
        <taxon>Xenopus</taxon>
        <taxon>Xenopus</taxon>
    </lineage>
</organism>
<accession>Q6GN30</accession>
<feature type="chain" id="PRO_0000291529" description="Trimeric intracellular cation channel type B-B">
    <location>
        <begin position="1"/>
        <end position="284"/>
    </location>
</feature>
<feature type="topological domain" description="Lumenal" evidence="6">
    <location>
        <begin position="1"/>
        <end position="15"/>
    </location>
</feature>
<feature type="transmembrane region" description="Helical;Name=1" evidence="3">
    <location>
        <begin position="16"/>
        <end position="32"/>
    </location>
</feature>
<feature type="topological domain" description="Cytoplasmic" evidence="6">
    <location>
        <begin position="33"/>
        <end position="44"/>
    </location>
</feature>
<feature type="transmembrane region" description="Helical;Name=2" evidence="3">
    <location>
        <begin position="45"/>
        <end position="68"/>
    </location>
</feature>
<feature type="topological domain" description="Lumenal" evidence="6">
    <location>
        <begin position="69"/>
        <end position="79"/>
    </location>
</feature>
<feature type="transmembrane region" description="Helical;Name=3" evidence="3">
    <location>
        <begin position="80"/>
        <end position="99"/>
    </location>
</feature>
<feature type="topological domain" description="Cytoplasmic" evidence="6">
    <location>
        <begin position="100"/>
        <end position="102"/>
    </location>
</feature>
<feature type="transmembrane region" description="Helical;Name=4" evidence="3">
    <location>
        <begin position="103"/>
        <end position="121"/>
    </location>
</feature>
<feature type="topological domain" description="Lumenal" evidence="6">
    <location>
        <begin position="122"/>
        <end position="139"/>
    </location>
</feature>
<feature type="transmembrane region" description="Helical;Name=5" evidence="3">
    <location>
        <begin position="140"/>
        <end position="157"/>
    </location>
</feature>
<feature type="topological domain" description="Cytoplasmic" evidence="6">
    <location>
        <begin position="158"/>
        <end position="178"/>
    </location>
</feature>
<feature type="transmembrane region" description="Helical;Name=6" evidence="3">
    <location>
        <begin position="179"/>
        <end position="196"/>
    </location>
</feature>
<feature type="topological domain" description="Lumenal" evidence="6">
    <location>
        <begin position="197"/>
        <end position="204"/>
    </location>
</feature>
<feature type="transmembrane region" description="Helical;Name=7" evidence="3">
    <location>
        <begin position="205"/>
        <end position="225"/>
    </location>
</feature>
<feature type="topological domain" description="Cytoplasmic" evidence="6">
    <location>
        <begin position="226"/>
        <end position="284"/>
    </location>
</feature>
<feature type="region of interest" description="Disordered" evidence="4">
    <location>
        <begin position="250"/>
        <end position="284"/>
    </location>
</feature>
<feature type="compositionally biased region" description="Basic and acidic residues" evidence="4">
    <location>
        <begin position="269"/>
        <end position="284"/>
    </location>
</feature>
<feature type="binding site" evidence="2">
    <location>
        <position position="117"/>
    </location>
    <ligand>
        <name>a 1,2-diacyl-sn-glycero-3-phospho-(1D-myo-inositol-4,5-bisphosphate)</name>
        <dbReference type="ChEBI" id="CHEBI:58456"/>
    </ligand>
</feature>
<feature type="binding site" evidence="2">
    <location>
        <position position="121"/>
    </location>
    <ligand>
        <name>a 1,2-diacyl-sn-glycero-3-phospho-(1D-myo-inositol-4,5-bisphosphate)</name>
        <dbReference type="ChEBI" id="CHEBI:58456"/>
    </ligand>
</feature>
<feature type="helix" evidence="11">
    <location>
        <begin position="6"/>
        <end position="12"/>
    </location>
</feature>
<feature type="helix" evidence="11">
    <location>
        <begin position="19"/>
        <end position="33"/>
    </location>
</feature>
<feature type="helix" evidence="11">
    <location>
        <begin position="38"/>
        <end position="44"/>
    </location>
</feature>
<feature type="helix" evidence="11">
    <location>
        <begin position="46"/>
        <end position="67"/>
    </location>
</feature>
<feature type="helix" evidence="11">
    <location>
        <begin position="72"/>
        <end position="76"/>
    </location>
</feature>
<feature type="helix" evidence="11">
    <location>
        <begin position="79"/>
        <end position="94"/>
    </location>
</feature>
<feature type="helix" evidence="11">
    <location>
        <begin position="96"/>
        <end position="98"/>
    </location>
</feature>
<feature type="helix" evidence="11">
    <location>
        <begin position="99"/>
        <end position="104"/>
    </location>
</feature>
<feature type="helix" evidence="11">
    <location>
        <begin position="107"/>
        <end position="135"/>
    </location>
</feature>
<feature type="strand" evidence="11">
    <location>
        <begin position="136"/>
        <end position="138"/>
    </location>
</feature>
<feature type="helix" evidence="11">
    <location>
        <begin position="140"/>
        <end position="151"/>
    </location>
</feature>
<feature type="helix" evidence="11">
    <location>
        <begin position="153"/>
        <end position="156"/>
    </location>
</feature>
<feature type="helix" evidence="11">
    <location>
        <begin position="158"/>
        <end position="165"/>
    </location>
</feature>
<feature type="turn" evidence="11">
    <location>
        <begin position="174"/>
        <end position="176"/>
    </location>
</feature>
<feature type="helix" evidence="11">
    <location>
        <begin position="180"/>
        <end position="196"/>
    </location>
</feature>
<feature type="strand" evidence="11">
    <location>
        <begin position="200"/>
        <end position="202"/>
    </location>
</feature>
<feature type="helix" evidence="11">
    <location>
        <begin position="204"/>
        <end position="226"/>
    </location>
</feature>
<sequence>MESLSEVSVQFSQLSMFPFFDMAHYLASVMSAREQAGALDIASHSPMASWFSAMLHCFGGGILSSILLAEPPVGILANTTNIMLASAIWYMVYYFPYDLFYNCFFFLPIRLIAAGMKEVTRTWKILSGITHAHSHYKDAWLVMITIGWARGAGGGLISNFEQLVRGVWKPESNEFLKMSYPVKVTLIGAVLFTLQHGHYLPISRHNLMFIYTMFLVSIKVTMMLTHSAGSPFLPLETPLHRILFGLRQNQAEVRESPSSSGAKGKPSKKTLDKDSGEQSNKKDK</sequence>
<evidence type="ECO:0000250" key="1">
    <source>
        <dbReference type="UniProtKB" id="Q9DAV9"/>
    </source>
</evidence>
<evidence type="ECO:0000250" key="2">
    <source>
        <dbReference type="UniProtKB" id="Q9NA73"/>
    </source>
</evidence>
<evidence type="ECO:0000255" key="3"/>
<evidence type="ECO:0000256" key="4">
    <source>
        <dbReference type="SAM" id="MobiDB-lite"/>
    </source>
</evidence>
<evidence type="ECO:0000269" key="5">
    <source>
    </source>
</evidence>
<evidence type="ECO:0000305" key="6"/>
<evidence type="ECO:0007744" key="7">
    <source>
        <dbReference type="PDB" id="6IZ3"/>
    </source>
</evidence>
<evidence type="ECO:0007744" key="8">
    <source>
        <dbReference type="PDB" id="6IZ4"/>
    </source>
</evidence>
<evidence type="ECO:0007744" key="9">
    <source>
        <dbReference type="PDB" id="6IZ5"/>
    </source>
</evidence>
<evidence type="ECO:0007744" key="10">
    <source>
        <dbReference type="PDB" id="6IZ6"/>
    </source>
</evidence>
<evidence type="ECO:0007829" key="11">
    <source>
        <dbReference type="PDB" id="6IZ4"/>
    </source>
</evidence>
<protein>
    <recommendedName>
        <fullName>Trimeric intracellular cation channel type B-B</fullName>
        <shortName>TRIC-B-B</shortName>
        <shortName>TRICB-B</shortName>
    </recommendedName>
    <alternativeName>
        <fullName>Transmembrane protein 38B-B</fullName>
    </alternativeName>
</protein>
<dbReference type="EMBL" id="BC073691">
    <property type="protein sequence ID" value="AAH73691.1"/>
    <property type="molecule type" value="mRNA"/>
</dbReference>
<dbReference type="RefSeq" id="NP_001086006.1">
    <property type="nucleotide sequence ID" value="NM_001092537.1"/>
</dbReference>
<dbReference type="PDB" id="6IZ3">
    <property type="method" value="X-ray"/>
    <property type="resolution" value="3.79 A"/>
    <property type="chains" value="A/B/C/D=1-284"/>
</dbReference>
<dbReference type="PDB" id="6IZ4">
    <property type="method" value="X-ray"/>
    <property type="resolution" value="3.10 A"/>
    <property type="chains" value="A/B/C/D/E/F/G/H/I/J/K/L=1-284"/>
</dbReference>
<dbReference type="PDB" id="6IZ5">
    <property type="method" value="X-ray"/>
    <property type="resolution" value="3.70 A"/>
    <property type="chains" value="A=1-284"/>
</dbReference>
<dbReference type="PDB" id="6IZ6">
    <property type="method" value="X-ray"/>
    <property type="resolution" value="3.29 A"/>
    <property type="chains" value="A=1-284"/>
</dbReference>
<dbReference type="PDBsum" id="6IZ3"/>
<dbReference type="PDBsum" id="6IZ4"/>
<dbReference type="PDBsum" id="6IZ5"/>
<dbReference type="PDBsum" id="6IZ6"/>
<dbReference type="SMR" id="Q6GN30"/>
<dbReference type="DNASU" id="444435"/>
<dbReference type="GeneID" id="444435"/>
<dbReference type="KEGG" id="xla:444435"/>
<dbReference type="AGR" id="Xenbase:XB-GENE-6255127"/>
<dbReference type="CTD" id="444435"/>
<dbReference type="Xenbase" id="XB-GENE-6255127">
    <property type="gene designation" value="tmem38b.L"/>
</dbReference>
<dbReference type="OMA" id="SCWASTM"/>
<dbReference type="OrthoDB" id="195817at2759"/>
<dbReference type="Proteomes" id="UP000186698">
    <property type="component" value="Chromosome 1L"/>
</dbReference>
<dbReference type="Bgee" id="444435">
    <property type="expression patterns" value="Expressed in zone of skin and 19 other cell types or tissues"/>
</dbReference>
<dbReference type="GO" id="GO:0005783">
    <property type="term" value="C:endoplasmic reticulum"/>
    <property type="evidence" value="ECO:0000250"/>
    <property type="project" value="UniProtKB"/>
</dbReference>
<dbReference type="GO" id="GO:0005789">
    <property type="term" value="C:endoplasmic reticulum membrane"/>
    <property type="evidence" value="ECO:0007669"/>
    <property type="project" value="UniProtKB-SubCell"/>
</dbReference>
<dbReference type="GO" id="GO:0042802">
    <property type="term" value="F:identical protein binding"/>
    <property type="evidence" value="ECO:0007669"/>
    <property type="project" value="InterPro"/>
</dbReference>
<dbReference type="GO" id="GO:0005267">
    <property type="term" value="F:potassium channel activity"/>
    <property type="evidence" value="ECO:0000314"/>
    <property type="project" value="UniProtKB"/>
</dbReference>
<dbReference type="GO" id="GO:0051279">
    <property type="term" value="P:regulation of release of sequestered calcium ion into cytosol"/>
    <property type="evidence" value="ECO:0000314"/>
    <property type="project" value="UniProtKB"/>
</dbReference>
<dbReference type="InterPro" id="IPR007866">
    <property type="entry name" value="TRIC_channel"/>
</dbReference>
<dbReference type="PANTHER" id="PTHR12454">
    <property type="entry name" value="TRIMERIC INTRACELLULAR CATION CHANNEL"/>
    <property type="match status" value="1"/>
</dbReference>
<dbReference type="PANTHER" id="PTHR12454:SF5">
    <property type="entry name" value="TRIMERIC INTRACELLULAR CATION CHANNEL TYPE B"/>
    <property type="match status" value="1"/>
</dbReference>
<dbReference type="Pfam" id="PF05197">
    <property type="entry name" value="TRIC"/>
    <property type="match status" value="1"/>
</dbReference>